<sequence length="291" mass="30757">MKFKKMLTLAAIGLSGFGLVACGNQSAASKQSASGTIEVISRENGSGTRGAFTEITGILKKDGDKKIDNTAKTAVIQNSTEGVLSAVQGNANAIGYISLGSLTKSVKALEIDGVKASRDTVLDGEYPLQRPFNIVWSSNLSKLGQDFISFIHSKQGQQVVTDNKFIEAKTETTEYTSQHLSGKLSVVGSTSVSSLMEKLAEAYKKENPEVTIDITSNGSSAGITAVKEKTADIGMVSRELTPEEGKSLTHDAIALDGIAVVVNNDNKASQVSMAELADVFSGKLTTWDKIK</sequence>
<organism>
    <name type="scientific">Streptococcus pneumoniae serotype 4 (strain ATCC BAA-334 / TIGR4)</name>
    <dbReference type="NCBI Taxonomy" id="170187"/>
    <lineage>
        <taxon>Bacteria</taxon>
        <taxon>Bacillati</taxon>
        <taxon>Bacillota</taxon>
        <taxon>Bacilli</taxon>
        <taxon>Lactobacillales</taxon>
        <taxon>Streptococcaceae</taxon>
        <taxon>Streptococcus</taxon>
    </lineage>
</organism>
<protein>
    <recommendedName>
        <fullName>Phosphate-binding protein PstS 2</fullName>
        <shortName>PBP 2</shortName>
    </recommendedName>
</protein>
<name>PSTS2_STRPN</name>
<dbReference type="EMBL" id="AY039745">
    <property type="protein sequence ID" value="AAK72111.1"/>
    <property type="molecule type" value="Genomic_DNA"/>
</dbReference>
<dbReference type="EMBL" id="AE005672">
    <property type="protein sequence ID" value="AAK76144.1"/>
    <property type="molecule type" value="Genomic_DNA"/>
</dbReference>
<dbReference type="PIR" id="G95243">
    <property type="entry name" value="G95243"/>
</dbReference>
<dbReference type="RefSeq" id="WP_000669493.1">
    <property type="nucleotide sequence ID" value="NZ_CP155539.1"/>
</dbReference>
<dbReference type="PDB" id="4H1X">
    <property type="method" value="X-ray"/>
    <property type="resolution" value="1.77 A"/>
    <property type="chains" value="A=28-291"/>
</dbReference>
<dbReference type="PDBsum" id="4H1X"/>
<dbReference type="SMR" id="P0C2M5"/>
<dbReference type="PaxDb" id="170187-SP_2084"/>
<dbReference type="DNASU" id="931962"/>
<dbReference type="EnsemblBacteria" id="AAK76144">
    <property type="protein sequence ID" value="AAK76144"/>
    <property type="gene ID" value="SP_2084"/>
</dbReference>
<dbReference type="KEGG" id="spn:SP_2084"/>
<dbReference type="eggNOG" id="COG0226">
    <property type="taxonomic scope" value="Bacteria"/>
</dbReference>
<dbReference type="EvolutionaryTrace" id="P0C2M5"/>
<dbReference type="Proteomes" id="UP000000585">
    <property type="component" value="Chromosome"/>
</dbReference>
<dbReference type="GO" id="GO:0005886">
    <property type="term" value="C:plasma membrane"/>
    <property type="evidence" value="ECO:0007669"/>
    <property type="project" value="UniProtKB-SubCell"/>
</dbReference>
<dbReference type="GO" id="GO:0006817">
    <property type="term" value="P:phosphate ion transport"/>
    <property type="evidence" value="ECO:0007669"/>
    <property type="project" value="UniProtKB-KW"/>
</dbReference>
<dbReference type="FunFam" id="3.40.190.10:FF:000184">
    <property type="entry name" value="Phosphate ABC transporter, phosphate-binding protein"/>
    <property type="match status" value="1"/>
</dbReference>
<dbReference type="FunFam" id="3.40.190.10:FF:000229">
    <property type="entry name" value="Phosphate ABC transporter, phosphate-binding protein"/>
    <property type="match status" value="1"/>
</dbReference>
<dbReference type="Gene3D" id="3.40.190.10">
    <property type="entry name" value="Periplasmic binding protein-like II"/>
    <property type="match status" value="2"/>
</dbReference>
<dbReference type="InterPro" id="IPR024370">
    <property type="entry name" value="PBP_domain"/>
</dbReference>
<dbReference type="InterPro" id="IPR050811">
    <property type="entry name" value="Phosphate_ABC_transporter"/>
</dbReference>
<dbReference type="PANTHER" id="PTHR30570">
    <property type="entry name" value="PERIPLASMIC PHOSPHATE BINDING COMPONENT OF PHOSPHATE ABC TRANSPORTER"/>
    <property type="match status" value="1"/>
</dbReference>
<dbReference type="PANTHER" id="PTHR30570:SF1">
    <property type="entry name" value="PHOSPHATE-BINDING PROTEIN PSTS"/>
    <property type="match status" value="1"/>
</dbReference>
<dbReference type="Pfam" id="PF12849">
    <property type="entry name" value="PBP_like_2"/>
    <property type="match status" value="2"/>
</dbReference>
<dbReference type="SUPFAM" id="SSF53850">
    <property type="entry name" value="Periplasmic binding protein-like II"/>
    <property type="match status" value="2"/>
</dbReference>
<dbReference type="PROSITE" id="PS51257">
    <property type="entry name" value="PROKAR_LIPOPROTEIN"/>
    <property type="match status" value="1"/>
</dbReference>
<proteinExistence type="evidence at protein level"/>
<keyword id="KW-0002">3D-structure</keyword>
<keyword id="KW-1003">Cell membrane</keyword>
<keyword id="KW-0449">Lipoprotein</keyword>
<keyword id="KW-0472">Membrane</keyword>
<keyword id="KW-0564">Palmitate</keyword>
<keyword id="KW-0592">Phosphate transport</keyword>
<keyword id="KW-1185">Reference proteome</keyword>
<keyword id="KW-0732">Signal</keyword>
<keyword id="KW-0346">Stress response</keyword>
<keyword id="KW-0813">Transport</keyword>
<feature type="signal peptide" evidence="1">
    <location>
        <begin position="1"/>
        <end position="21"/>
    </location>
</feature>
<feature type="chain" id="PRO_0000281671" description="Phosphate-binding protein PstS 2">
    <location>
        <begin position="22"/>
        <end position="291"/>
    </location>
</feature>
<feature type="lipid moiety-binding region" description="N-palmitoyl cysteine" evidence="1">
    <location>
        <position position="22"/>
    </location>
</feature>
<feature type="lipid moiety-binding region" description="S-diacylglycerol cysteine" evidence="1">
    <location>
        <position position="22"/>
    </location>
</feature>
<feature type="strand" evidence="5">
    <location>
        <begin position="38"/>
        <end position="42"/>
    </location>
</feature>
<feature type="helix" evidence="5">
    <location>
        <begin position="47"/>
        <end position="55"/>
    </location>
</feature>
<feature type="strand" evidence="5">
    <location>
        <begin position="59"/>
        <end position="64"/>
    </location>
</feature>
<feature type="strand" evidence="5">
    <location>
        <begin position="66"/>
        <end position="68"/>
    </location>
</feature>
<feature type="strand" evidence="5">
    <location>
        <begin position="75"/>
        <end position="79"/>
    </location>
</feature>
<feature type="helix" evidence="5">
    <location>
        <begin position="80"/>
        <end position="89"/>
    </location>
</feature>
<feature type="strand" evidence="5">
    <location>
        <begin position="93"/>
        <end position="98"/>
    </location>
</feature>
<feature type="helix" evidence="5">
    <location>
        <begin position="99"/>
        <end position="101"/>
    </location>
</feature>
<feature type="strand" evidence="5">
    <location>
        <begin position="106"/>
        <end position="108"/>
    </location>
</feature>
<feature type="helix" evidence="5">
    <location>
        <begin position="118"/>
        <end position="122"/>
    </location>
</feature>
<feature type="strand" evidence="5">
    <location>
        <begin position="128"/>
        <end position="136"/>
    </location>
</feature>
<feature type="helix" evidence="5">
    <location>
        <begin position="142"/>
        <end position="152"/>
    </location>
</feature>
<feature type="helix" evidence="5">
    <location>
        <begin position="154"/>
        <end position="162"/>
    </location>
</feature>
<feature type="strand" evidence="5">
    <location>
        <begin position="181"/>
        <end position="188"/>
    </location>
</feature>
<feature type="helix" evidence="5">
    <location>
        <begin position="190"/>
        <end position="206"/>
    </location>
</feature>
<feature type="strand" evidence="5">
    <location>
        <begin position="209"/>
        <end position="217"/>
    </location>
</feature>
<feature type="helix" evidence="5">
    <location>
        <begin position="219"/>
        <end position="227"/>
    </location>
</feature>
<feature type="strand" evidence="5">
    <location>
        <begin position="232"/>
        <end position="238"/>
    </location>
</feature>
<feature type="helix" evidence="5">
    <location>
        <begin position="242"/>
        <end position="245"/>
    </location>
</feature>
<feature type="strand" evidence="5">
    <location>
        <begin position="249"/>
        <end position="262"/>
    </location>
</feature>
<feature type="helix" evidence="5">
    <location>
        <begin position="273"/>
        <end position="280"/>
    </location>
</feature>
<feature type="helix" evidence="5">
    <location>
        <begin position="287"/>
        <end position="289"/>
    </location>
</feature>
<comment type="function">
    <text evidence="4">Part of the ABC transporter complex PstSACB involved in phosphate import.</text>
</comment>
<comment type="subunit">
    <text evidence="2">The complex is composed of two ATP-binding proteins (PstB), two transmembrane proteins (PstC and PstA) and a solute-binding protein (PstS).</text>
</comment>
<comment type="subcellular location">
    <subcellularLocation>
        <location evidence="2">Cell membrane</location>
        <topology evidence="2">Lipid-anchor</topology>
    </subcellularLocation>
</comment>
<comment type="induction">
    <text evidence="3">By phosphate starvation.</text>
</comment>
<comment type="miscellaneous">
    <text>Overexpression seems to confer resistance to penicillin.</text>
</comment>
<comment type="similarity">
    <text evidence="2">Belongs to the PstS family.</text>
</comment>
<accession>P0C2M5</accession>
<accession>Q7D480</accession>
<accession>Q9X4T0</accession>
<reference key="1">
    <citation type="journal article" date="2001" name="Infect. Immun.">
        <title>Streptococcus pneumoniae PstS production is phosphate responsive and enhanced during growth in the murine peritoneal cavity.</title>
        <authorList>
            <person name="Orihuela C.J."/>
            <person name="Mills J."/>
            <person name="Robb C.W."/>
            <person name="Wilson C.J."/>
            <person name="Watson D.A."/>
            <person name="Niesel D.W."/>
        </authorList>
    </citation>
    <scope>NUCLEOTIDE SEQUENCE [GENOMIC DNA]</scope>
    <scope>INDUCTION</scope>
    <source>
        <strain>WU2 / Serotype 3</strain>
    </source>
</reference>
<reference key="2">
    <citation type="journal article" date="2001" name="Science">
        <title>Complete genome sequence of a virulent isolate of Streptococcus pneumoniae.</title>
        <authorList>
            <person name="Tettelin H."/>
            <person name="Nelson K.E."/>
            <person name="Paulsen I.T."/>
            <person name="Eisen J.A."/>
            <person name="Read T.D."/>
            <person name="Peterson S.N."/>
            <person name="Heidelberg J.F."/>
            <person name="DeBoy R.T."/>
            <person name="Haft D.H."/>
            <person name="Dodson R.J."/>
            <person name="Durkin A.S."/>
            <person name="Gwinn M.L."/>
            <person name="Kolonay J.F."/>
            <person name="Nelson W.C."/>
            <person name="Peterson J.D."/>
            <person name="Umayam L.A."/>
            <person name="White O."/>
            <person name="Salzberg S.L."/>
            <person name="Lewis M.R."/>
            <person name="Radune D."/>
            <person name="Holtzapple E.K."/>
            <person name="Khouri H.M."/>
            <person name="Wolf A.M."/>
            <person name="Utterback T.R."/>
            <person name="Hansen C.L."/>
            <person name="McDonald L.A."/>
            <person name="Feldblyum T.V."/>
            <person name="Angiuoli S.V."/>
            <person name="Dickinson T."/>
            <person name="Hickey E.K."/>
            <person name="Holt I.E."/>
            <person name="Loftus B.J."/>
            <person name="Yang F."/>
            <person name="Smith H.O."/>
            <person name="Venter J.C."/>
            <person name="Dougherty B.A."/>
            <person name="Morrison D.A."/>
            <person name="Hollingshead S.K."/>
            <person name="Fraser C.M."/>
        </authorList>
    </citation>
    <scope>NUCLEOTIDE SEQUENCE [LARGE SCALE GENOMIC DNA]</scope>
    <source>
        <strain>ATCC BAA-334 / TIGR4</strain>
    </source>
</reference>
<reference key="3">
    <citation type="journal article" date="2005" name="Mol. Microbiol.">
        <title>A proteomic analysis of penicillin resistance in Streptococcus pneumoniae reveals a novel role for PstS, a subunit of the phosphate ABC transporter.</title>
        <authorList>
            <person name="Soualhine H."/>
            <person name="Brochu V."/>
            <person name="Menard F."/>
            <person name="Papadopoulou B."/>
            <person name="Weiss K."/>
            <person name="Bergeron M.G."/>
            <person name="Legare D."/>
            <person name="Drummelsmith J."/>
            <person name="Ouellette M."/>
        </authorList>
    </citation>
    <scope>ROLE IN PENICILLIN RESISTANCE</scope>
</reference>
<gene>
    <name type="primary">pstS2</name>
    <name type="ordered locus">SP_2084</name>
</gene>
<evidence type="ECO:0000255" key="1">
    <source>
        <dbReference type="PROSITE-ProRule" id="PRU00303"/>
    </source>
</evidence>
<evidence type="ECO:0000305" key="2"/>
<evidence type="ECO:0000305" key="3">
    <source>
    </source>
</evidence>
<evidence type="ECO:0000305" key="4">
    <source>
    </source>
</evidence>
<evidence type="ECO:0007829" key="5">
    <source>
        <dbReference type="PDB" id="4H1X"/>
    </source>
</evidence>